<organism>
    <name type="scientific">Influenza A virus (strain A/Duck/Czechoslovakia/1956 H4N6)</name>
    <dbReference type="NCBI Taxonomy" id="385590"/>
    <lineage>
        <taxon>Viruses</taxon>
        <taxon>Riboviria</taxon>
        <taxon>Orthornavirae</taxon>
        <taxon>Negarnaviricota</taxon>
        <taxon>Polyploviricotina</taxon>
        <taxon>Insthoviricetes</taxon>
        <taxon>Articulavirales</taxon>
        <taxon>Orthomyxoviridae</taxon>
        <taxon>Alphainfluenzavirus</taxon>
        <taxon>Alphainfluenzavirus influenzae</taxon>
        <taxon>Influenza A virus</taxon>
    </lineage>
</organism>
<comment type="function">
    <text evidence="1">Inhibits post-transcriptional processing of cellular pre-mRNA, by binding and inhibiting two cellular proteins that are required for the 3'-end processing of cellular pre-mRNAs: the 30 kDa cleavage and polyadenylation specificity factor/CPSF4 and the poly(A)-binding protein 2/PABPN1. In turn, unprocessed 3' end pre-mRNAs accumulate in the host nucleus and are no longer exported to the cytoplasm. Cellular protein synthesis is thereby shut off very early after virus infection. Viral protein synthesis is not affected by the inhibition of the cellular 3' end processing machinery because the poly(A) tails of viral mRNAs are produced by the viral polymerase through a stuttering mechanism. Prevents the establishment of the cellular antiviral state by inhibiting TRIM25-mediated RIGI ubiquitination, which normally triggers the antiviral transduction signal that leads to the activation of type I IFN genes by transcription factors IRF3 and IRF7. Also binds poly(A) and U6 snRNA. Inhibits the integrated stress response (ISR) in the infected cell by blocking dsRNA binding by EIF2AK2/PKR and further phosphorylation of EIF2S1/EIF-2ALPHA. Stress granule formation is thus inhibited, which allows protein synthesis and viral replication.</text>
</comment>
<comment type="subunit">
    <text evidence="1">Homodimer. Interacts with host TRIM25 (via coiled coil); this interaction specifically inhibits TRIM25 multimerization and TRIM25-mediated RIGI CARD ubiquitination. Interacts with human EIF2AK2/PKR, CPSF4, IVNS1ABP and PABPN1.</text>
</comment>
<comment type="subcellular location">
    <subcellularLocation>
        <location evidence="1">Host nucleus</location>
    </subcellularLocation>
    <subcellularLocation>
        <location evidence="1">Host cytoplasm</location>
    </subcellularLocation>
    <text evidence="1">In uninfected, transfected cells, NS1 is localized in the nucleus. Only in virus infected cells, the nuclear export signal is unveiled, presumably by a viral protein, and a fraction of NS1 is exported in the cytoplasm.</text>
</comment>
<comment type="alternative products">
    <event type="alternative splicing"/>
    <isoform>
        <id>Q20NB9-1</id>
        <name>NS1</name>
        <sequence type="displayed"/>
    </isoform>
    <isoform>
        <id>Q20NC0-1</id>
        <name>NEP</name>
        <name>NS2</name>
        <sequence type="external"/>
    </isoform>
</comment>
<comment type="domain">
    <text evidence="1">The dsRNA-binding region is required for suppression of RNA silencing.</text>
</comment>
<comment type="PTM">
    <text evidence="1">Upon interferon induction, ISGylated via host HERC5; this results in the impairment of NS1 interaction with RNA targets due to its inability to form homodimers and to interact with host EIF2AK2/PKR.</text>
</comment>
<comment type="similarity">
    <text evidence="1">Belongs to the influenza A viruses NS1 family.</text>
</comment>
<name>NS1_I56A1</name>
<organismHost>
    <name type="scientific">Aves</name>
    <dbReference type="NCBI Taxonomy" id="8782"/>
</organismHost>
<organismHost>
    <name type="scientific">Sus scrofa</name>
    <name type="common">Pig</name>
    <dbReference type="NCBI Taxonomy" id="9823"/>
</organismHost>
<keyword id="KW-0025">Alternative splicing</keyword>
<keyword id="KW-1262">Eukaryotic host gene expression shutoff by virus</keyword>
<keyword id="KW-1035">Host cytoplasm</keyword>
<keyword id="KW-1190">Host gene expression shutoff by virus</keyword>
<keyword id="KW-1192">Host mRNA suppression by virus</keyword>
<keyword id="KW-1048">Host nucleus</keyword>
<keyword id="KW-0945">Host-virus interaction</keyword>
<keyword id="KW-1090">Inhibition of host innate immune response by virus</keyword>
<keyword id="KW-1114">Inhibition of host interferon signaling pathway by virus</keyword>
<keyword id="KW-1102">Inhibition of host PKR by virus</keyword>
<keyword id="KW-1103">Inhibition of host pre-mRNA processing by virus</keyword>
<keyword id="KW-1088">Inhibition of host RIG-I by virus</keyword>
<keyword id="KW-1113">Inhibition of host RLR pathway by virus</keyword>
<keyword id="KW-0922">Interferon antiviral system evasion</keyword>
<keyword id="KW-0694">RNA-binding</keyword>
<keyword id="KW-0832">Ubl conjugation</keyword>
<keyword id="KW-0899">Viral immunoevasion</keyword>
<feature type="chain" id="PRO_0000324238" description="Non-structural protein 1">
    <location>
        <begin position="1"/>
        <end position="202"/>
    </location>
</feature>
<feature type="region of interest" description="RNA-binding and homodimerization" evidence="1">
    <location>
        <begin position="1"/>
        <end position="73"/>
    </location>
</feature>
<feature type="short sequence motif" description="Nuclear localization signal" evidence="1">
    <location>
        <begin position="34"/>
        <end position="38"/>
    </location>
</feature>
<feature type="short sequence motif" description="Nuclear export signal" evidence="1">
    <location>
        <begin position="137"/>
        <end position="146"/>
    </location>
</feature>
<dbReference type="EMBL" id="CY006039">
    <property type="protein sequence ID" value="ABB90225.1"/>
    <property type="molecule type" value="Genomic_RNA"/>
</dbReference>
<dbReference type="SMR" id="Q20NB9"/>
<dbReference type="Proteomes" id="UP000008434">
    <property type="component" value="Genome"/>
</dbReference>
<dbReference type="Proteomes" id="UP000108613">
    <property type="component" value="Genome"/>
</dbReference>
<dbReference type="GO" id="GO:0030430">
    <property type="term" value="C:host cell cytoplasm"/>
    <property type="evidence" value="ECO:0007669"/>
    <property type="project" value="UniProtKB-SubCell"/>
</dbReference>
<dbReference type="GO" id="GO:0042025">
    <property type="term" value="C:host cell nucleus"/>
    <property type="evidence" value="ECO:0007669"/>
    <property type="project" value="UniProtKB-SubCell"/>
</dbReference>
<dbReference type="GO" id="GO:0030291">
    <property type="term" value="F:protein serine/threonine kinase inhibitor activity"/>
    <property type="evidence" value="ECO:0007669"/>
    <property type="project" value="UniProtKB-KW"/>
</dbReference>
<dbReference type="GO" id="GO:0003723">
    <property type="term" value="F:RNA binding"/>
    <property type="evidence" value="ECO:0007669"/>
    <property type="project" value="UniProtKB-KW"/>
</dbReference>
<dbReference type="GO" id="GO:0039540">
    <property type="term" value="P:symbiont-mediated suppression of host cytoplasmic pattern recognition receptor signaling pathway via inhibition of RIG-I activity"/>
    <property type="evidence" value="ECO:0007669"/>
    <property type="project" value="UniProtKB-KW"/>
</dbReference>
<dbReference type="GO" id="GO:0039657">
    <property type="term" value="P:symbiont-mediated suppression of host gene expression"/>
    <property type="evidence" value="ECO:0007669"/>
    <property type="project" value="UniProtKB-KW"/>
</dbReference>
<dbReference type="GO" id="GO:0039524">
    <property type="term" value="P:symbiont-mediated suppression of host mRNA processing"/>
    <property type="evidence" value="ECO:0007669"/>
    <property type="project" value="UniProtKB-KW"/>
</dbReference>
<dbReference type="GO" id="GO:0039580">
    <property type="term" value="P:symbiont-mediated suppression of host PKR/eIFalpha signaling"/>
    <property type="evidence" value="ECO:0007669"/>
    <property type="project" value="UniProtKB-KW"/>
</dbReference>
<dbReference type="GO" id="GO:0039502">
    <property type="term" value="P:symbiont-mediated suppression of host type I interferon-mediated signaling pathway"/>
    <property type="evidence" value="ECO:0007669"/>
    <property type="project" value="UniProtKB-KW"/>
</dbReference>
<dbReference type="FunFam" id="1.10.287.10:FF:000001">
    <property type="entry name" value="Non-structural protein 1"/>
    <property type="match status" value="1"/>
</dbReference>
<dbReference type="Gene3D" id="3.30.420.330">
    <property type="entry name" value="Influenza virus non-structural protein, effector domain"/>
    <property type="match status" value="1"/>
</dbReference>
<dbReference type="Gene3D" id="1.10.287.10">
    <property type="entry name" value="S15/NS1, RNA-binding"/>
    <property type="match status" value="1"/>
</dbReference>
<dbReference type="HAMAP" id="MF_04066">
    <property type="entry name" value="INFV_NS1"/>
    <property type="match status" value="1"/>
</dbReference>
<dbReference type="InterPro" id="IPR004208">
    <property type="entry name" value="NS1"/>
</dbReference>
<dbReference type="InterPro" id="IPR000256">
    <property type="entry name" value="NS1A"/>
</dbReference>
<dbReference type="InterPro" id="IPR038064">
    <property type="entry name" value="NS1A_effect_dom-like_sf"/>
</dbReference>
<dbReference type="InterPro" id="IPR009068">
    <property type="entry name" value="uS15_NS1_RNA-bd_sf"/>
</dbReference>
<dbReference type="Pfam" id="PF00600">
    <property type="entry name" value="Flu_NS1"/>
    <property type="match status" value="1"/>
</dbReference>
<dbReference type="SUPFAM" id="SSF143021">
    <property type="entry name" value="Ns1 effector domain-like"/>
    <property type="match status" value="1"/>
</dbReference>
<dbReference type="SUPFAM" id="SSF47060">
    <property type="entry name" value="S15/NS1 RNA-binding domain"/>
    <property type="match status" value="1"/>
</dbReference>
<proteinExistence type="inferred from homology"/>
<protein>
    <recommendedName>
        <fullName evidence="1">Non-structural protein 1</fullName>
        <shortName evidence="1">NS1</shortName>
    </recommendedName>
    <alternativeName>
        <fullName evidence="1">NS1A</fullName>
    </alternativeName>
</protein>
<evidence type="ECO:0000255" key="1">
    <source>
        <dbReference type="HAMAP-Rule" id="MF_04066"/>
    </source>
</evidence>
<accession>Q20NB9</accession>
<sequence>MDSNTVSSFQVDCFLWHIRKRFADQELGDAPFLDRLRRDQKSLRGRGSTLGLDIETATRAGKQIVERILEEESDEALKMTIASVPASRYLTDMTLEEMSRDWFMLMPKQKMAGSLCIRMDQAIMDKNIILKANFSVIFDRLETLILLRAFTEEGAIVGEISPLPSLPGHTDEDVKNAIGVIIGGLEWNDNTVRVSETLQRFA</sequence>
<gene>
    <name evidence="1" type="primary">NS</name>
</gene>
<reference key="1">
    <citation type="journal article" date="2006" name="Science">
        <title>Large-scale sequence analysis of avian influenza isolates.</title>
        <authorList>
            <person name="Obenauer J.C."/>
            <person name="Denson J."/>
            <person name="Mehta P.K."/>
            <person name="Su X."/>
            <person name="Mukatira S."/>
            <person name="Finkelstein D.B."/>
            <person name="Xu X."/>
            <person name="Wang J."/>
            <person name="Ma J."/>
            <person name="Fan Y."/>
            <person name="Rakestraw K.M."/>
            <person name="Webster R.G."/>
            <person name="Hoffmann E."/>
            <person name="Krauss S."/>
            <person name="Zheng J."/>
            <person name="Zhang Z."/>
            <person name="Naeve C.W."/>
        </authorList>
    </citation>
    <scope>NUCLEOTIDE SEQUENCE [GENOMIC RNA]</scope>
</reference>